<gene>
    <name evidence="1" type="primary">tpiA</name>
    <name type="ordered locus">ABO_0325</name>
</gene>
<name>TPIS_ALCBS</name>
<proteinExistence type="inferred from homology"/>
<comment type="function">
    <text evidence="1">Involved in the gluconeogenesis. Catalyzes stereospecifically the conversion of dihydroxyacetone phosphate (DHAP) to D-glyceraldehyde-3-phosphate (G3P).</text>
</comment>
<comment type="catalytic activity">
    <reaction evidence="1">
        <text>D-glyceraldehyde 3-phosphate = dihydroxyacetone phosphate</text>
        <dbReference type="Rhea" id="RHEA:18585"/>
        <dbReference type="ChEBI" id="CHEBI:57642"/>
        <dbReference type="ChEBI" id="CHEBI:59776"/>
        <dbReference type="EC" id="5.3.1.1"/>
    </reaction>
</comment>
<comment type="pathway">
    <text evidence="1">Carbohydrate biosynthesis; gluconeogenesis.</text>
</comment>
<comment type="pathway">
    <text evidence="1">Carbohydrate degradation; glycolysis; D-glyceraldehyde 3-phosphate from glycerone phosphate: step 1/1.</text>
</comment>
<comment type="subunit">
    <text evidence="1">Homodimer.</text>
</comment>
<comment type="subcellular location">
    <subcellularLocation>
        <location evidence="1">Cytoplasm</location>
    </subcellularLocation>
</comment>
<comment type="similarity">
    <text evidence="1">Belongs to the triosephosphate isomerase family.</text>
</comment>
<sequence length="247" mass="25415">MNRTPLVAGNWKMNGRKDLLTEMADALAGYAGAAEVVICPPFPYLAAARSAMPGAVGIGSQNVSEQEDGAFTGEVSAPMLAEVGCGYVIIGHSERRALYGETDAQIASKFAHAQAAGLVPILCVGETLEERDSGNTDTIVCGQLRAVVDAVGVAAFANAIVAYEPVWAIGTGKTASPEQAQAVHACLRQFLAKDDPDIAQSLRLLYGGSVKADNAALLFAQSDIDGGLIGGASLTADSFIAICQAAE</sequence>
<evidence type="ECO:0000255" key="1">
    <source>
        <dbReference type="HAMAP-Rule" id="MF_00147"/>
    </source>
</evidence>
<protein>
    <recommendedName>
        <fullName evidence="1">Triosephosphate isomerase</fullName>
        <shortName evidence="1">TIM</shortName>
        <shortName evidence="1">TPI</shortName>
        <ecNumber evidence="1">5.3.1.1</ecNumber>
    </recommendedName>
    <alternativeName>
        <fullName evidence="1">Triose-phosphate isomerase</fullName>
    </alternativeName>
</protein>
<organism>
    <name type="scientific">Alcanivorax borkumensis (strain ATCC 700651 / DSM 11573 / NCIMB 13689 / SK2)</name>
    <dbReference type="NCBI Taxonomy" id="393595"/>
    <lineage>
        <taxon>Bacteria</taxon>
        <taxon>Pseudomonadati</taxon>
        <taxon>Pseudomonadota</taxon>
        <taxon>Gammaproteobacteria</taxon>
        <taxon>Oceanospirillales</taxon>
        <taxon>Alcanivoracaceae</taxon>
        <taxon>Alcanivorax</taxon>
    </lineage>
</organism>
<feature type="chain" id="PRO_0000307421" description="Triosephosphate isomerase">
    <location>
        <begin position="1"/>
        <end position="247"/>
    </location>
</feature>
<feature type="active site" description="Electrophile" evidence="1">
    <location>
        <position position="92"/>
    </location>
</feature>
<feature type="active site" description="Proton acceptor" evidence="1">
    <location>
        <position position="164"/>
    </location>
</feature>
<feature type="binding site" evidence="1">
    <location>
        <begin position="10"/>
        <end position="12"/>
    </location>
    <ligand>
        <name>substrate</name>
    </ligand>
</feature>
<feature type="binding site" evidence="1">
    <location>
        <position position="170"/>
    </location>
    <ligand>
        <name>substrate</name>
    </ligand>
</feature>
<feature type="binding site" evidence="1">
    <location>
        <position position="209"/>
    </location>
    <ligand>
        <name>substrate</name>
    </ligand>
</feature>
<feature type="binding site" evidence="1">
    <location>
        <begin position="230"/>
        <end position="231"/>
    </location>
    <ligand>
        <name>substrate</name>
    </ligand>
</feature>
<accession>Q0VSS5</accession>
<dbReference type="EC" id="5.3.1.1" evidence="1"/>
<dbReference type="EMBL" id="AM286690">
    <property type="protein sequence ID" value="CAL15773.1"/>
    <property type="molecule type" value="Genomic_DNA"/>
</dbReference>
<dbReference type="RefSeq" id="WP_011587621.1">
    <property type="nucleotide sequence ID" value="NC_008260.1"/>
</dbReference>
<dbReference type="SMR" id="Q0VSS5"/>
<dbReference type="STRING" id="393595.ABO_0325"/>
<dbReference type="KEGG" id="abo:ABO_0325"/>
<dbReference type="eggNOG" id="COG0149">
    <property type="taxonomic scope" value="Bacteria"/>
</dbReference>
<dbReference type="HOGENOM" id="CLU_024251_2_1_6"/>
<dbReference type="OrthoDB" id="9809429at2"/>
<dbReference type="UniPathway" id="UPA00109">
    <property type="reaction ID" value="UER00189"/>
</dbReference>
<dbReference type="UniPathway" id="UPA00138"/>
<dbReference type="Proteomes" id="UP000008871">
    <property type="component" value="Chromosome"/>
</dbReference>
<dbReference type="GO" id="GO:0005829">
    <property type="term" value="C:cytosol"/>
    <property type="evidence" value="ECO:0007669"/>
    <property type="project" value="TreeGrafter"/>
</dbReference>
<dbReference type="GO" id="GO:0004807">
    <property type="term" value="F:triose-phosphate isomerase activity"/>
    <property type="evidence" value="ECO:0007669"/>
    <property type="project" value="UniProtKB-UniRule"/>
</dbReference>
<dbReference type="GO" id="GO:0006094">
    <property type="term" value="P:gluconeogenesis"/>
    <property type="evidence" value="ECO:0007669"/>
    <property type="project" value="UniProtKB-UniRule"/>
</dbReference>
<dbReference type="GO" id="GO:0046166">
    <property type="term" value="P:glyceraldehyde-3-phosphate biosynthetic process"/>
    <property type="evidence" value="ECO:0007669"/>
    <property type="project" value="TreeGrafter"/>
</dbReference>
<dbReference type="GO" id="GO:0019563">
    <property type="term" value="P:glycerol catabolic process"/>
    <property type="evidence" value="ECO:0007669"/>
    <property type="project" value="TreeGrafter"/>
</dbReference>
<dbReference type="GO" id="GO:0006096">
    <property type="term" value="P:glycolytic process"/>
    <property type="evidence" value="ECO:0007669"/>
    <property type="project" value="UniProtKB-UniRule"/>
</dbReference>
<dbReference type="CDD" id="cd00311">
    <property type="entry name" value="TIM"/>
    <property type="match status" value="1"/>
</dbReference>
<dbReference type="FunFam" id="3.20.20.70:FF:000020">
    <property type="entry name" value="Triosephosphate isomerase"/>
    <property type="match status" value="1"/>
</dbReference>
<dbReference type="Gene3D" id="3.20.20.70">
    <property type="entry name" value="Aldolase class I"/>
    <property type="match status" value="1"/>
</dbReference>
<dbReference type="HAMAP" id="MF_00147_B">
    <property type="entry name" value="TIM_B"/>
    <property type="match status" value="1"/>
</dbReference>
<dbReference type="InterPro" id="IPR013785">
    <property type="entry name" value="Aldolase_TIM"/>
</dbReference>
<dbReference type="InterPro" id="IPR035990">
    <property type="entry name" value="TIM_sf"/>
</dbReference>
<dbReference type="InterPro" id="IPR022896">
    <property type="entry name" value="TrioseP_Isoase_bac/euk"/>
</dbReference>
<dbReference type="InterPro" id="IPR000652">
    <property type="entry name" value="Triosephosphate_isomerase"/>
</dbReference>
<dbReference type="InterPro" id="IPR020861">
    <property type="entry name" value="Triosephosphate_isomerase_AS"/>
</dbReference>
<dbReference type="NCBIfam" id="TIGR00419">
    <property type="entry name" value="tim"/>
    <property type="match status" value="1"/>
</dbReference>
<dbReference type="PANTHER" id="PTHR21139">
    <property type="entry name" value="TRIOSEPHOSPHATE ISOMERASE"/>
    <property type="match status" value="1"/>
</dbReference>
<dbReference type="PANTHER" id="PTHR21139:SF42">
    <property type="entry name" value="TRIOSEPHOSPHATE ISOMERASE"/>
    <property type="match status" value="1"/>
</dbReference>
<dbReference type="Pfam" id="PF00121">
    <property type="entry name" value="TIM"/>
    <property type="match status" value="1"/>
</dbReference>
<dbReference type="SUPFAM" id="SSF51351">
    <property type="entry name" value="Triosephosphate isomerase (TIM)"/>
    <property type="match status" value="1"/>
</dbReference>
<dbReference type="PROSITE" id="PS00171">
    <property type="entry name" value="TIM_1"/>
    <property type="match status" value="1"/>
</dbReference>
<dbReference type="PROSITE" id="PS51440">
    <property type="entry name" value="TIM_2"/>
    <property type="match status" value="1"/>
</dbReference>
<keyword id="KW-0963">Cytoplasm</keyword>
<keyword id="KW-0312">Gluconeogenesis</keyword>
<keyword id="KW-0324">Glycolysis</keyword>
<keyword id="KW-0413">Isomerase</keyword>
<keyword id="KW-1185">Reference proteome</keyword>
<reference key="1">
    <citation type="journal article" date="2006" name="Nat. Biotechnol.">
        <title>Genome sequence of the ubiquitous hydrocarbon-degrading marine bacterium Alcanivorax borkumensis.</title>
        <authorList>
            <person name="Schneiker S."/>
            <person name="Martins dos Santos V.A.P."/>
            <person name="Bartels D."/>
            <person name="Bekel T."/>
            <person name="Brecht M."/>
            <person name="Buhrmester J."/>
            <person name="Chernikova T.N."/>
            <person name="Denaro R."/>
            <person name="Ferrer M."/>
            <person name="Gertler C."/>
            <person name="Goesmann A."/>
            <person name="Golyshina O.V."/>
            <person name="Kaminski F."/>
            <person name="Khachane A.N."/>
            <person name="Lang S."/>
            <person name="Linke B."/>
            <person name="McHardy A.C."/>
            <person name="Meyer F."/>
            <person name="Nechitaylo T."/>
            <person name="Puehler A."/>
            <person name="Regenhardt D."/>
            <person name="Rupp O."/>
            <person name="Sabirova J.S."/>
            <person name="Selbitschka W."/>
            <person name="Yakimov M.M."/>
            <person name="Timmis K.N."/>
            <person name="Vorhoelter F.-J."/>
            <person name="Weidner S."/>
            <person name="Kaiser O."/>
            <person name="Golyshin P.N."/>
        </authorList>
    </citation>
    <scope>NUCLEOTIDE SEQUENCE [LARGE SCALE GENOMIC DNA]</scope>
    <source>
        <strain>ATCC 700651 / DSM 11573 / NCIMB 13689 / SK2</strain>
    </source>
</reference>